<gene>
    <name type="ORF">DDB_G0290859</name>
</gene>
<reference key="1">
    <citation type="journal article" date="2005" name="Nature">
        <title>The genome of the social amoeba Dictyostelium discoideum.</title>
        <authorList>
            <person name="Eichinger L."/>
            <person name="Pachebat J.A."/>
            <person name="Gloeckner G."/>
            <person name="Rajandream M.A."/>
            <person name="Sucgang R."/>
            <person name="Berriman M."/>
            <person name="Song J."/>
            <person name="Olsen R."/>
            <person name="Szafranski K."/>
            <person name="Xu Q."/>
            <person name="Tunggal B."/>
            <person name="Kummerfeld S."/>
            <person name="Madera M."/>
            <person name="Konfortov B.A."/>
            <person name="Rivero F."/>
            <person name="Bankier A.T."/>
            <person name="Lehmann R."/>
            <person name="Hamlin N."/>
            <person name="Davies R."/>
            <person name="Gaudet P."/>
            <person name="Fey P."/>
            <person name="Pilcher K."/>
            <person name="Chen G."/>
            <person name="Saunders D."/>
            <person name="Sodergren E.J."/>
            <person name="Davis P."/>
            <person name="Kerhornou A."/>
            <person name="Nie X."/>
            <person name="Hall N."/>
            <person name="Anjard C."/>
            <person name="Hemphill L."/>
            <person name="Bason N."/>
            <person name="Farbrother P."/>
            <person name="Desany B."/>
            <person name="Just E."/>
            <person name="Morio T."/>
            <person name="Rost R."/>
            <person name="Churcher C.M."/>
            <person name="Cooper J."/>
            <person name="Haydock S."/>
            <person name="van Driessche N."/>
            <person name="Cronin A."/>
            <person name="Goodhead I."/>
            <person name="Muzny D.M."/>
            <person name="Mourier T."/>
            <person name="Pain A."/>
            <person name="Lu M."/>
            <person name="Harper D."/>
            <person name="Lindsay R."/>
            <person name="Hauser H."/>
            <person name="James K.D."/>
            <person name="Quiles M."/>
            <person name="Madan Babu M."/>
            <person name="Saito T."/>
            <person name="Buchrieser C."/>
            <person name="Wardroper A."/>
            <person name="Felder M."/>
            <person name="Thangavelu M."/>
            <person name="Johnson D."/>
            <person name="Knights A."/>
            <person name="Loulseged H."/>
            <person name="Mungall K.L."/>
            <person name="Oliver K."/>
            <person name="Price C."/>
            <person name="Quail M.A."/>
            <person name="Urushihara H."/>
            <person name="Hernandez J."/>
            <person name="Rabbinowitsch E."/>
            <person name="Steffen D."/>
            <person name="Sanders M."/>
            <person name="Ma J."/>
            <person name="Kohara Y."/>
            <person name="Sharp S."/>
            <person name="Simmonds M.N."/>
            <person name="Spiegler S."/>
            <person name="Tivey A."/>
            <person name="Sugano S."/>
            <person name="White B."/>
            <person name="Walker D."/>
            <person name="Woodward J.R."/>
            <person name="Winckler T."/>
            <person name="Tanaka Y."/>
            <person name="Shaulsky G."/>
            <person name="Schleicher M."/>
            <person name="Weinstock G.M."/>
            <person name="Rosenthal A."/>
            <person name="Cox E.C."/>
            <person name="Chisholm R.L."/>
            <person name="Gibbs R.A."/>
            <person name="Loomis W.F."/>
            <person name="Platzer M."/>
            <person name="Kay R.R."/>
            <person name="Williams J.G."/>
            <person name="Dear P.H."/>
            <person name="Noegel A.A."/>
            <person name="Barrell B.G."/>
            <person name="Kuspa A."/>
        </authorList>
    </citation>
    <scope>NUCLEOTIDE SEQUENCE [LARGE SCALE GENOMIC DNA]</scope>
    <source>
        <strain>AX4</strain>
    </source>
</reference>
<protein>
    <recommendedName>
        <fullName>Probable serine/threonine-protein kinase DDB_G0290859</fullName>
        <ecNumber>2.7.11.1</ecNumber>
    </recommendedName>
</protein>
<name>Y1638_DICDI</name>
<feature type="chain" id="PRO_0000355012" description="Probable serine/threonine-protein kinase DDB_G0290859">
    <location>
        <begin position="1"/>
        <end position="419"/>
    </location>
</feature>
<feature type="domain" description="Protein kinase" evidence="1">
    <location>
        <begin position="40"/>
        <end position="387"/>
    </location>
</feature>
<feature type="domain" description="AGC-kinase C-terminal" evidence="2">
    <location>
        <begin position="388"/>
        <end position="419"/>
    </location>
</feature>
<feature type="active site" description="Proton acceptor" evidence="1 3">
    <location>
        <position position="173"/>
    </location>
</feature>
<feature type="binding site" evidence="1">
    <location>
        <begin position="46"/>
        <end position="54"/>
    </location>
    <ligand>
        <name>ATP</name>
        <dbReference type="ChEBI" id="CHEBI:30616"/>
    </ligand>
</feature>
<feature type="binding site" evidence="1">
    <location>
        <position position="69"/>
    </location>
    <ligand>
        <name>ATP</name>
        <dbReference type="ChEBI" id="CHEBI:30616"/>
    </ligand>
</feature>
<comment type="catalytic activity">
    <reaction>
        <text>L-seryl-[protein] + ATP = O-phospho-L-seryl-[protein] + ADP + H(+)</text>
        <dbReference type="Rhea" id="RHEA:17989"/>
        <dbReference type="Rhea" id="RHEA-COMP:9863"/>
        <dbReference type="Rhea" id="RHEA-COMP:11604"/>
        <dbReference type="ChEBI" id="CHEBI:15378"/>
        <dbReference type="ChEBI" id="CHEBI:29999"/>
        <dbReference type="ChEBI" id="CHEBI:30616"/>
        <dbReference type="ChEBI" id="CHEBI:83421"/>
        <dbReference type="ChEBI" id="CHEBI:456216"/>
        <dbReference type="EC" id="2.7.11.1"/>
    </reaction>
</comment>
<comment type="catalytic activity">
    <reaction>
        <text>L-threonyl-[protein] + ATP = O-phospho-L-threonyl-[protein] + ADP + H(+)</text>
        <dbReference type="Rhea" id="RHEA:46608"/>
        <dbReference type="Rhea" id="RHEA-COMP:11060"/>
        <dbReference type="Rhea" id="RHEA-COMP:11605"/>
        <dbReference type="ChEBI" id="CHEBI:15378"/>
        <dbReference type="ChEBI" id="CHEBI:30013"/>
        <dbReference type="ChEBI" id="CHEBI:30616"/>
        <dbReference type="ChEBI" id="CHEBI:61977"/>
        <dbReference type="ChEBI" id="CHEBI:456216"/>
        <dbReference type="EC" id="2.7.11.1"/>
    </reaction>
</comment>
<comment type="similarity">
    <text evidence="4">Belongs to the protein kinase superfamily. AGC Ser/Thr protein kinase family.</text>
</comment>
<accession>Q54FH3</accession>
<sequence length="419" mass="46649">MEPILIPSQHNRLVIPSEPNEEEFNYIADGYKGKLNIDSYDIISTIGSGSYGEVCIVREKSTKQVYAMKKIYYTEVSDTELVKKRALRERDAMVICNNKNNKRAPKLYCSFIDDNEGVFYYVMEFIAGGDFNSYCYKRLVDGKKFTEEEIKFYIAELVLCLEAFHSYGLLHRDVKPENLMINKDGHLVLGDFGSSKLANNSGGGGGNFGNTLTVPMSTSYSTSPSSSISSSLLGGSGGFTPSHWNGMAGSAGSSFGSSSLGRSFDNTPPNFNSFLRNPHSSYTSYIGTPQYMAVEVVQGVNYSKLCDFWSLGAILFELVTGQALFVESPDTTEQKIRENIGNWRGLLNTAVQKNQPMSKQAESLIRECIAPERKRPDASTIKKHPFFEGINWEEMANFNVEPPFKPTLSSDDDISYFTN</sequence>
<keyword id="KW-0067">ATP-binding</keyword>
<keyword id="KW-0418">Kinase</keyword>
<keyword id="KW-0547">Nucleotide-binding</keyword>
<keyword id="KW-1185">Reference proteome</keyword>
<keyword id="KW-0723">Serine/threonine-protein kinase</keyword>
<keyword id="KW-0808">Transferase</keyword>
<organism>
    <name type="scientific">Dictyostelium discoideum</name>
    <name type="common">Social amoeba</name>
    <dbReference type="NCBI Taxonomy" id="44689"/>
    <lineage>
        <taxon>Eukaryota</taxon>
        <taxon>Amoebozoa</taxon>
        <taxon>Evosea</taxon>
        <taxon>Eumycetozoa</taxon>
        <taxon>Dictyostelia</taxon>
        <taxon>Dictyosteliales</taxon>
        <taxon>Dictyosteliaceae</taxon>
        <taxon>Dictyostelium</taxon>
    </lineage>
</organism>
<evidence type="ECO:0000255" key="1">
    <source>
        <dbReference type="PROSITE-ProRule" id="PRU00159"/>
    </source>
</evidence>
<evidence type="ECO:0000255" key="2">
    <source>
        <dbReference type="PROSITE-ProRule" id="PRU00618"/>
    </source>
</evidence>
<evidence type="ECO:0000255" key="3">
    <source>
        <dbReference type="PROSITE-ProRule" id="PRU10027"/>
    </source>
</evidence>
<evidence type="ECO:0000305" key="4"/>
<dbReference type="EC" id="2.7.11.1"/>
<dbReference type="EMBL" id="AAFI02000171">
    <property type="protein sequence ID" value="EAL61994.1"/>
    <property type="molecule type" value="Genomic_DNA"/>
</dbReference>
<dbReference type="RefSeq" id="XP_635498.1">
    <property type="nucleotide sequence ID" value="XM_630406.1"/>
</dbReference>
<dbReference type="SMR" id="Q54FH3"/>
<dbReference type="STRING" id="44689.Q54FH3"/>
<dbReference type="PaxDb" id="44689-DDB0216387"/>
<dbReference type="EnsemblProtists" id="EAL61994">
    <property type="protein sequence ID" value="EAL61994"/>
    <property type="gene ID" value="DDB_G0290859"/>
</dbReference>
<dbReference type="GeneID" id="8627865"/>
<dbReference type="KEGG" id="ddi:DDB_G0290859"/>
<dbReference type="dictyBase" id="DDB_G0290859"/>
<dbReference type="VEuPathDB" id="AmoebaDB:DDB_G0290859"/>
<dbReference type="eggNOG" id="KOG0605">
    <property type="taxonomic scope" value="Eukaryota"/>
</dbReference>
<dbReference type="HOGENOM" id="CLU_656262_0_0_1"/>
<dbReference type="InParanoid" id="Q54FH3"/>
<dbReference type="OMA" id="TPQYMAV"/>
<dbReference type="PhylomeDB" id="Q54FH3"/>
<dbReference type="Reactome" id="R-DDI-9013418">
    <property type="pathway name" value="RHOBTB2 GTPase cycle"/>
</dbReference>
<dbReference type="Reactome" id="R-DDI-9013422">
    <property type="pathway name" value="RHOBTB1 GTPase cycle"/>
</dbReference>
<dbReference type="PRO" id="PR:Q54FH3"/>
<dbReference type="Proteomes" id="UP000002195">
    <property type="component" value="Chromosome 5"/>
</dbReference>
<dbReference type="GO" id="GO:0005524">
    <property type="term" value="F:ATP binding"/>
    <property type="evidence" value="ECO:0007669"/>
    <property type="project" value="UniProtKB-KW"/>
</dbReference>
<dbReference type="GO" id="GO:0106310">
    <property type="term" value="F:protein serine kinase activity"/>
    <property type="evidence" value="ECO:0007669"/>
    <property type="project" value="RHEA"/>
</dbReference>
<dbReference type="GO" id="GO:0004674">
    <property type="term" value="F:protein serine/threonine kinase activity"/>
    <property type="evidence" value="ECO:0000318"/>
    <property type="project" value="GO_Central"/>
</dbReference>
<dbReference type="GO" id="GO:0035556">
    <property type="term" value="P:intracellular signal transduction"/>
    <property type="evidence" value="ECO:0000318"/>
    <property type="project" value="GO_Central"/>
</dbReference>
<dbReference type="FunFam" id="1.10.510.10:FF:000405">
    <property type="entry name" value="Mitogen-activated protein kinase"/>
    <property type="match status" value="1"/>
</dbReference>
<dbReference type="FunFam" id="3.30.200.20:FF:001228">
    <property type="entry name" value="Probable serine/threonine-protein kinase DDB_G0290859"/>
    <property type="match status" value="1"/>
</dbReference>
<dbReference type="Gene3D" id="3.30.200.20">
    <property type="entry name" value="Phosphorylase Kinase, domain 1"/>
    <property type="match status" value="2"/>
</dbReference>
<dbReference type="Gene3D" id="1.10.510.10">
    <property type="entry name" value="Transferase(Phosphotransferase) domain 1"/>
    <property type="match status" value="2"/>
</dbReference>
<dbReference type="InterPro" id="IPR000961">
    <property type="entry name" value="AGC-kinase_C"/>
</dbReference>
<dbReference type="InterPro" id="IPR011009">
    <property type="entry name" value="Kinase-like_dom_sf"/>
</dbReference>
<dbReference type="InterPro" id="IPR000719">
    <property type="entry name" value="Prot_kinase_dom"/>
</dbReference>
<dbReference type="InterPro" id="IPR017441">
    <property type="entry name" value="Protein_kinase_ATP_BS"/>
</dbReference>
<dbReference type="InterPro" id="IPR008271">
    <property type="entry name" value="Ser/Thr_kinase_AS"/>
</dbReference>
<dbReference type="InterPro" id="IPR050236">
    <property type="entry name" value="Ser_Thr_kinase_AGC"/>
</dbReference>
<dbReference type="PANTHER" id="PTHR24356">
    <property type="entry name" value="SERINE/THREONINE-PROTEIN KINASE"/>
    <property type="match status" value="1"/>
</dbReference>
<dbReference type="PANTHER" id="PTHR24356:SF302">
    <property type="entry name" value="SERINE_THREONINE-PROTEIN KINASE DDB_G0290859-RELATED"/>
    <property type="match status" value="1"/>
</dbReference>
<dbReference type="Pfam" id="PF00069">
    <property type="entry name" value="Pkinase"/>
    <property type="match status" value="2"/>
</dbReference>
<dbReference type="SMART" id="SM00220">
    <property type="entry name" value="S_TKc"/>
    <property type="match status" value="1"/>
</dbReference>
<dbReference type="SUPFAM" id="SSF56112">
    <property type="entry name" value="Protein kinase-like (PK-like)"/>
    <property type="match status" value="1"/>
</dbReference>
<dbReference type="PROSITE" id="PS51285">
    <property type="entry name" value="AGC_KINASE_CTER"/>
    <property type="match status" value="1"/>
</dbReference>
<dbReference type="PROSITE" id="PS00107">
    <property type="entry name" value="PROTEIN_KINASE_ATP"/>
    <property type="match status" value="1"/>
</dbReference>
<dbReference type="PROSITE" id="PS50011">
    <property type="entry name" value="PROTEIN_KINASE_DOM"/>
    <property type="match status" value="1"/>
</dbReference>
<dbReference type="PROSITE" id="PS00108">
    <property type="entry name" value="PROTEIN_KINASE_ST"/>
    <property type="match status" value="1"/>
</dbReference>
<proteinExistence type="inferred from homology"/>